<organism>
    <name type="scientific">Mus musculus</name>
    <name type="common">Mouse</name>
    <dbReference type="NCBI Taxonomy" id="10090"/>
    <lineage>
        <taxon>Eukaryota</taxon>
        <taxon>Metazoa</taxon>
        <taxon>Chordata</taxon>
        <taxon>Craniata</taxon>
        <taxon>Vertebrata</taxon>
        <taxon>Euteleostomi</taxon>
        <taxon>Mammalia</taxon>
        <taxon>Eutheria</taxon>
        <taxon>Euarchontoglires</taxon>
        <taxon>Glires</taxon>
        <taxon>Rodentia</taxon>
        <taxon>Myomorpha</taxon>
        <taxon>Muroidea</taxon>
        <taxon>Muridae</taxon>
        <taxon>Murinae</taxon>
        <taxon>Mus</taxon>
        <taxon>Mus</taxon>
    </lineage>
</organism>
<evidence type="ECO:0000250" key="1">
    <source>
        <dbReference type="UniProtKB" id="Q8WY36"/>
    </source>
</evidence>
<evidence type="ECO:0000255" key="2">
    <source>
        <dbReference type="PROSITE-ProRule" id="PRU00267"/>
    </source>
</evidence>
<evidence type="ECO:0000256" key="3">
    <source>
        <dbReference type="SAM" id="MobiDB-lite"/>
    </source>
</evidence>
<evidence type="ECO:0000269" key="4">
    <source>
    </source>
</evidence>
<evidence type="ECO:0000269" key="5">
    <source>
    </source>
</evidence>
<evidence type="ECO:0000303" key="6">
    <source>
    </source>
</evidence>
<evidence type="ECO:0000303" key="7">
    <source>
    </source>
</evidence>
<evidence type="ECO:0000305" key="8"/>
<evidence type="ECO:0007744" key="9">
    <source>
    </source>
</evidence>
<evidence type="ECO:0007829" key="10">
    <source>
        <dbReference type="PDB" id="1WZ6"/>
    </source>
</evidence>
<reference key="1">
    <citation type="submission" date="2001-12" db="EMBL/GenBank/DDBJ databases">
        <title>BBX is expressed in developing CNS and in neuronal tumours.</title>
        <authorList>
            <person name="Lee C.-J."/>
            <person name="Chan W.-I."/>
            <person name="Appleby V.J."/>
            <person name="Orme A.T."/>
            <person name="Scotting P.J."/>
        </authorList>
    </citation>
    <scope>NUCLEOTIDE SEQUENCE [MRNA] (ISOFORM 1)</scope>
</reference>
<reference key="2">
    <citation type="journal article" date="2005" name="Science">
        <title>The transcriptional landscape of the mammalian genome.</title>
        <authorList>
            <person name="Carninci P."/>
            <person name="Kasukawa T."/>
            <person name="Katayama S."/>
            <person name="Gough J."/>
            <person name="Frith M.C."/>
            <person name="Maeda N."/>
            <person name="Oyama R."/>
            <person name="Ravasi T."/>
            <person name="Lenhard B."/>
            <person name="Wells C."/>
            <person name="Kodzius R."/>
            <person name="Shimokawa K."/>
            <person name="Bajic V.B."/>
            <person name="Brenner S.E."/>
            <person name="Batalov S."/>
            <person name="Forrest A.R."/>
            <person name="Zavolan M."/>
            <person name="Davis M.J."/>
            <person name="Wilming L.G."/>
            <person name="Aidinis V."/>
            <person name="Allen J.E."/>
            <person name="Ambesi-Impiombato A."/>
            <person name="Apweiler R."/>
            <person name="Aturaliya R.N."/>
            <person name="Bailey T.L."/>
            <person name="Bansal M."/>
            <person name="Baxter L."/>
            <person name="Beisel K.W."/>
            <person name="Bersano T."/>
            <person name="Bono H."/>
            <person name="Chalk A.M."/>
            <person name="Chiu K.P."/>
            <person name="Choudhary V."/>
            <person name="Christoffels A."/>
            <person name="Clutterbuck D.R."/>
            <person name="Crowe M.L."/>
            <person name="Dalla E."/>
            <person name="Dalrymple B.P."/>
            <person name="de Bono B."/>
            <person name="Della Gatta G."/>
            <person name="di Bernardo D."/>
            <person name="Down T."/>
            <person name="Engstrom P."/>
            <person name="Fagiolini M."/>
            <person name="Faulkner G."/>
            <person name="Fletcher C.F."/>
            <person name="Fukushima T."/>
            <person name="Furuno M."/>
            <person name="Futaki S."/>
            <person name="Gariboldi M."/>
            <person name="Georgii-Hemming P."/>
            <person name="Gingeras T.R."/>
            <person name="Gojobori T."/>
            <person name="Green R.E."/>
            <person name="Gustincich S."/>
            <person name="Harbers M."/>
            <person name="Hayashi Y."/>
            <person name="Hensch T.K."/>
            <person name="Hirokawa N."/>
            <person name="Hill D."/>
            <person name="Huminiecki L."/>
            <person name="Iacono M."/>
            <person name="Ikeo K."/>
            <person name="Iwama A."/>
            <person name="Ishikawa T."/>
            <person name="Jakt M."/>
            <person name="Kanapin A."/>
            <person name="Katoh M."/>
            <person name="Kawasawa Y."/>
            <person name="Kelso J."/>
            <person name="Kitamura H."/>
            <person name="Kitano H."/>
            <person name="Kollias G."/>
            <person name="Krishnan S.P."/>
            <person name="Kruger A."/>
            <person name="Kummerfeld S.K."/>
            <person name="Kurochkin I.V."/>
            <person name="Lareau L.F."/>
            <person name="Lazarevic D."/>
            <person name="Lipovich L."/>
            <person name="Liu J."/>
            <person name="Liuni S."/>
            <person name="McWilliam S."/>
            <person name="Madan Babu M."/>
            <person name="Madera M."/>
            <person name="Marchionni L."/>
            <person name="Matsuda H."/>
            <person name="Matsuzawa S."/>
            <person name="Miki H."/>
            <person name="Mignone F."/>
            <person name="Miyake S."/>
            <person name="Morris K."/>
            <person name="Mottagui-Tabar S."/>
            <person name="Mulder N."/>
            <person name="Nakano N."/>
            <person name="Nakauchi H."/>
            <person name="Ng P."/>
            <person name="Nilsson R."/>
            <person name="Nishiguchi S."/>
            <person name="Nishikawa S."/>
            <person name="Nori F."/>
            <person name="Ohara O."/>
            <person name="Okazaki Y."/>
            <person name="Orlando V."/>
            <person name="Pang K.C."/>
            <person name="Pavan W.J."/>
            <person name="Pavesi G."/>
            <person name="Pesole G."/>
            <person name="Petrovsky N."/>
            <person name="Piazza S."/>
            <person name="Reed J."/>
            <person name="Reid J.F."/>
            <person name="Ring B.Z."/>
            <person name="Ringwald M."/>
            <person name="Rost B."/>
            <person name="Ruan Y."/>
            <person name="Salzberg S.L."/>
            <person name="Sandelin A."/>
            <person name="Schneider C."/>
            <person name="Schoenbach C."/>
            <person name="Sekiguchi K."/>
            <person name="Semple C.A."/>
            <person name="Seno S."/>
            <person name="Sessa L."/>
            <person name="Sheng Y."/>
            <person name="Shibata Y."/>
            <person name="Shimada H."/>
            <person name="Shimada K."/>
            <person name="Silva D."/>
            <person name="Sinclair B."/>
            <person name="Sperling S."/>
            <person name="Stupka E."/>
            <person name="Sugiura K."/>
            <person name="Sultana R."/>
            <person name="Takenaka Y."/>
            <person name="Taki K."/>
            <person name="Tammoja K."/>
            <person name="Tan S.L."/>
            <person name="Tang S."/>
            <person name="Taylor M.S."/>
            <person name="Tegner J."/>
            <person name="Teichmann S.A."/>
            <person name="Ueda H.R."/>
            <person name="van Nimwegen E."/>
            <person name="Verardo R."/>
            <person name="Wei C.L."/>
            <person name="Yagi K."/>
            <person name="Yamanishi H."/>
            <person name="Zabarovsky E."/>
            <person name="Zhu S."/>
            <person name="Zimmer A."/>
            <person name="Hide W."/>
            <person name="Bult C."/>
            <person name="Grimmond S.M."/>
            <person name="Teasdale R.D."/>
            <person name="Liu E.T."/>
            <person name="Brusic V."/>
            <person name="Quackenbush J."/>
            <person name="Wahlestedt C."/>
            <person name="Mattick J.S."/>
            <person name="Hume D.A."/>
            <person name="Kai C."/>
            <person name="Sasaki D."/>
            <person name="Tomaru Y."/>
            <person name="Fukuda S."/>
            <person name="Kanamori-Katayama M."/>
            <person name="Suzuki M."/>
            <person name="Aoki J."/>
            <person name="Arakawa T."/>
            <person name="Iida J."/>
            <person name="Imamura K."/>
            <person name="Itoh M."/>
            <person name="Kato T."/>
            <person name="Kawaji H."/>
            <person name="Kawagashira N."/>
            <person name="Kawashima T."/>
            <person name="Kojima M."/>
            <person name="Kondo S."/>
            <person name="Konno H."/>
            <person name="Nakano K."/>
            <person name="Ninomiya N."/>
            <person name="Nishio T."/>
            <person name="Okada M."/>
            <person name="Plessy C."/>
            <person name="Shibata K."/>
            <person name="Shiraki T."/>
            <person name="Suzuki S."/>
            <person name="Tagami M."/>
            <person name="Waki K."/>
            <person name="Watahiki A."/>
            <person name="Okamura-Oho Y."/>
            <person name="Suzuki H."/>
            <person name="Kawai J."/>
            <person name="Hayashizaki Y."/>
        </authorList>
    </citation>
    <scope>NUCLEOTIDE SEQUENCE [LARGE SCALE MRNA] (ISOFORMS 3 AND 4)</scope>
    <source>
        <strain>C57BL/6J</strain>
        <tissue>Embryo</tissue>
        <tissue>Pancreas</tissue>
        <tissue>Testis</tissue>
    </source>
</reference>
<reference key="3">
    <citation type="journal article" date="2009" name="PLoS Biol.">
        <title>Lineage-specific biology revealed by a finished genome assembly of the mouse.</title>
        <authorList>
            <person name="Church D.M."/>
            <person name="Goodstadt L."/>
            <person name="Hillier L.W."/>
            <person name="Zody M.C."/>
            <person name="Goldstein S."/>
            <person name="She X."/>
            <person name="Bult C.J."/>
            <person name="Agarwala R."/>
            <person name="Cherry J.L."/>
            <person name="DiCuccio M."/>
            <person name="Hlavina W."/>
            <person name="Kapustin Y."/>
            <person name="Meric P."/>
            <person name="Maglott D."/>
            <person name="Birtle Z."/>
            <person name="Marques A.C."/>
            <person name="Graves T."/>
            <person name="Zhou S."/>
            <person name="Teague B."/>
            <person name="Potamousis K."/>
            <person name="Churas C."/>
            <person name="Place M."/>
            <person name="Herschleb J."/>
            <person name="Runnheim R."/>
            <person name="Forrest D."/>
            <person name="Amos-Landgraf J."/>
            <person name="Schwartz D.C."/>
            <person name="Cheng Z."/>
            <person name="Lindblad-Toh K."/>
            <person name="Eichler E.E."/>
            <person name="Ponting C.P."/>
        </authorList>
    </citation>
    <scope>NUCLEOTIDE SEQUENCE [LARGE SCALE GENOMIC DNA]</scope>
    <source>
        <strain>C57BL/6J</strain>
    </source>
</reference>
<reference key="4">
    <citation type="journal article" date="2004" name="Genome Res.">
        <title>The status, quality, and expansion of the NIH full-length cDNA project: the Mammalian Gene Collection (MGC).</title>
        <authorList>
            <consortium name="The MGC Project Team"/>
        </authorList>
    </citation>
    <scope>NUCLEOTIDE SEQUENCE [LARGE SCALE MRNA] (ISOFORM 2)</scope>
    <scope>VARIANTS LEU-30 AND HIS-281</scope>
    <source>
        <strain>C3H/He</strain>
        <strain>NMRI</strain>
        <tissue>Mammary gland</tissue>
        <tissue>Mammary tumor</tissue>
        <tissue>Mesenchymal stem cell</tissue>
    </source>
</reference>
<reference key="5">
    <citation type="journal article" date="2001" name="Curr. Genet.">
        <title>HBP2: a new mammalian protein that complements the fission yeast MBF transcription complex.</title>
        <authorList>
            <person name="Sanchez-Diaz A."/>
            <person name="Blanco M.A."/>
            <person name="Jones N."/>
            <person name="Moreno S."/>
        </authorList>
    </citation>
    <scope>NUCLEOTIDE SEQUENCE [MRNA] OF 1-454</scope>
    <scope>FUNCTION</scope>
    <source>
        <strain>C57BL/6J</strain>
        <tissue>Mammary gland</tissue>
    </source>
</reference>
<reference key="6">
    <citation type="journal article" date="2009" name="Immunity">
        <title>The phagosomal proteome in interferon-gamma-activated macrophages.</title>
        <authorList>
            <person name="Trost M."/>
            <person name="English L."/>
            <person name="Lemieux S."/>
            <person name="Courcelles M."/>
            <person name="Desjardins M."/>
            <person name="Thibault P."/>
        </authorList>
    </citation>
    <scope>IDENTIFICATION BY MASS SPECTROMETRY [LARGE SCALE ANALYSIS]</scope>
</reference>
<reference key="7">
    <citation type="journal article" date="2010" name="Cell">
        <title>A tissue-specific atlas of mouse protein phosphorylation and expression.</title>
        <authorList>
            <person name="Huttlin E.L."/>
            <person name="Jedrychowski M.P."/>
            <person name="Elias J.E."/>
            <person name="Goswami T."/>
            <person name="Rad R."/>
            <person name="Beausoleil S.A."/>
            <person name="Villen J."/>
            <person name="Haas W."/>
            <person name="Sowa M.E."/>
            <person name="Gygi S.P."/>
        </authorList>
    </citation>
    <scope>PHOSPHORYLATION [LARGE SCALE ANALYSIS] AT SER-242 AND SER-476</scope>
    <scope>IDENTIFICATION BY MASS SPECTROMETRY [LARGE SCALE ANALYSIS]</scope>
    <source>
        <tissue>Brown adipose tissue</tissue>
        <tissue>Kidney</tissue>
        <tissue>Lung</tissue>
        <tissue>Spleen</tissue>
        <tissue>Testis</tissue>
    </source>
</reference>
<reference key="8">
    <citation type="submission" date="2005-08" db="PDB data bank">
        <title>Solution structure of the HMG-box domain of murine bobby sox homolog.</title>
        <authorList>
            <consortium name="RIKEN structural genomics initiative (RSGI)"/>
        </authorList>
    </citation>
    <scope>STRUCTURE BY NMR OF 80-148</scope>
</reference>
<accession>Q8VBW5</accession>
<accession>B8JK46</accession>
<accession>B8JK47</accession>
<accession>B8JK48</accession>
<accession>B8JK49</accession>
<accession>Q3TZK1</accession>
<accession>Q6NXY8</accession>
<accession>Q6PEU3</accession>
<accession>Q8BQJ7</accession>
<accession>Q8C7E0</accession>
<accession>Q8CDQ0</accession>
<accession>Q8CDV1</accession>
<accession>Q8VI48</accession>
<accession>Q8VI49</accession>
<accession>Q8VI50</accession>
<accession>Q9CS94</accession>
<keyword id="KW-0002">3D-structure</keyword>
<keyword id="KW-0025">Alternative splicing</keyword>
<keyword id="KW-0238">DNA-binding</keyword>
<keyword id="KW-1017">Isopeptide bond</keyword>
<keyword id="KW-0539">Nucleus</keyword>
<keyword id="KW-0597">Phosphoprotein</keyword>
<keyword id="KW-1185">Reference proteome</keyword>
<keyword id="KW-0804">Transcription</keyword>
<keyword id="KW-0805">Transcription regulation</keyword>
<keyword id="KW-0832">Ubl conjugation</keyword>
<comment type="function">
    <text evidence="4">Transcription factor that is necessary for cell cycle progression from G1 to S phase.</text>
</comment>
<comment type="subcellular location">
    <subcellularLocation>
        <location evidence="8">Nucleus</location>
    </subcellularLocation>
</comment>
<comment type="alternative products">
    <event type="alternative splicing"/>
    <isoform>
        <id>Q8VBW5-1</id>
        <name>1</name>
        <name>BbxA</name>
        <sequence type="displayed"/>
    </isoform>
    <isoform>
        <id>Q8VBW5-2</id>
        <name>2</name>
        <sequence type="described" ref="VSP_018007 VSP_018008 VSP_018009"/>
    </isoform>
    <isoform>
        <id>Q8VBW5-3</id>
        <name>3</name>
        <sequence type="described" ref="VSP_018010"/>
    </isoform>
    <isoform>
        <id>Q8VBW5-4</id>
        <name>4</name>
        <sequence type="described" ref="VSP_018011 VSP_018012"/>
    </isoform>
</comment>
<comment type="sequence caution" evidence="8">
    <conflict type="miscellaneous discrepancy">
        <sequence resource="EMBL-CDS" id="AAL68987"/>
    </conflict>
    <text>Contaminating sequence. Potential poly-A sequence.</text>
</comment>
<comment type="sequence caution" evidence="8">
    <conflict type="erroneous initiation">
        <sequence resource="EMBL-CDS" id="AAL68988"/>
    </conflict>
</comment>
<dbReference type="EMBL" id="AF454943">
    <property type="protein sequence ID" value="AAL58872.1"/>
    <property type="molecule type" value="mRNA"/>
</dbReference>
<dbReference type="EMBL" id="AF454944">
    <property type="protein sequence ID" value="AAL58873.1"/>
    <property type="molecule type" value="mRNA"/>
</dbReference>
<dbReference type="EMBL" id="AK017487">
    <property type="protein sequence ID" value="BAB30768.1"/>
    <property type="molecule type" value="mRNA"/>
</dbReference>
<dbReference type="EMBL" id="AK029532">
    <property type="protein sequence ID" value="BAC26500.2"/>
    <property type="molecule type" value="mRNA"/>
</dbReference>
<dbReference type="EMBL" id="AK029747">
    <property type="protein sequence ID" value="BAC26596.1"/>
    <property type="molecule type" value="mRNA"/>
</dbReference>
<dbReference type="EMBL" id="AK049516">
    <property type="protein sequence ID" value="BAC33788.1"/>
    <property type="molecule type" value="mRNA"/>
</dbReference>
<dbReference type="EMBL" id="AK050488">
    <property type="protein sequence ID" value="BAC34285.1"/>
    <property type="molecule type" value="mRNA"/>
</dbReference>
<dbReference type="EMBL" id="AK157813">
    <property type="protein sequence ID" value="BAE34207.1"/>
    <property type="molecule type" value="mRNA"/>
</dbReference>
<dbReference type="EMBL" id="AC109627">
    <property type="status" value="NOT_ANNOTATED_CDS"/>
    <property type="molecule type" value="Genomic_DNA"/>
</dbReference>
<dbReference type="EMBL" id="CT571273">
    <property type="status" value="NOT_ANNOTATED_CDS"/>
    <property type="molecule type" value="Genomic_DNA"/>
</dbReference>
<dbReference type="EMBL" id="BC057869">
    <property type="protein sequence ID" value="AAH57869.1"/>
    <property type="molecule type" value="mRNA"/>
</dbReference>
<dbReference type="EMBL" id="BC066821">
    <property type="protein sequence ID" value="AAH66821.1"/>
    <property type="molecule type" value="mRNA"/>
</dbReference>
<dbReference type="EMBL" id="AF276950">
    <property type="protein sequence ID" value="AAL68986.1"/>
    <property type="molecule type" value="mRNA"/>
</dbReference>
<dbReference type="EMBL" id="AF276951">
    <property type="protein sequence ID" value="AAL68987.1"/>
    <property type="status" value="ALT_SEQ"/>
    <property type="molecule type" value="mRNA"/>
</dbReference>
<dbReference type="EMBL" id="AF276952">
    <property type="protein sequence ID" value="AAL68988.1"/>
    <property type="status" value="ALT_INIT"/>
    <property type="molecule type" value="mRNA"/>
</dbReference>
<dbReference type="CCDS" id="CCDS37354.1">
    <molecule id="Q8VBW5-1"/>
</dbReference>
<dbReference type="CCDS" id="CCDS84241.1">
    <molecule id="Q8VBW5-3"/>
</dbReference>
<dbReference type="RefSeq" id="NP_001334169.1">
    <molecule id="Q8VBW5-3"/>
    <property type="nucleotide sequence ID" value="NM_001347240.1"/>
</dbReference>
<dbReference type="RefSeq" id="NP_081720.2">
    <molecule id="Q8VBW5-1"/>
    <property type="nucleotide sequence ID" value="NM_027444.3"/>
</dbReference>
<dbReference type="RefSeq" id="XP_011244310.1">
    <molecule id="Q8VBW5-1"/>
    <property type="nucleotide sequence ID" value="XM_011246008.4"/>
</dbReference>
<dbReference type="RefSeq" id="XP_011244311.1">
    <molecule id="Q8VBW5-3"/>
    <property type="nucleotide sequence ID" value="XM_011246009.3"/>
</dbReference>
<dbReference type="RefSeq" id="XP_017172619.1">
    <molecule id="Q8VBW5-1"/>
    <property type="nucleotide sequence ID" value="XM_017317130.3"/>
</dbReference>
<dbReference type="RefSeq" id="XP_030105137.1">
    <molecule id="Q8VBW5-1"/>
    <property type="nucleotide sequence ID" value="XM_030249277.2"/>
</dbReference>
<dbReference type="RefSeq" id="XP_036016018.1">
    <molecule id="Q8VBW5-3"/>
    <property type="nucleotide sequence ID" value="XM_036160125.1"/>
</dbReference>
<dbReference type="PDB" id="1WZ6">
    <property type="method" value="NMR"/>
    <property type="chains" value="A=80-148"/>
</dbReference>
<dbReference type="PDBsum" id="1WZ6"/>
<dbReference type="SMR" id="Q8VBW5"/>
<dbReference type="BioGRID" id="214101">
    <property type="interactions" value="2"/>
</dbReference>
<dbReference type="FunCoup" id="Q8VBW5">
    <property type="interactions" value="2863"/>
</dbReference>
<dbReference type="STRING" id="10090.ENSMUSP00000119238"/>
<dbReference type="iPTMnet" id="Q8VBW5"/>
<dbReference type="PhosphoSitePlus" id="Q8VBW5"/>
<dbReference type="jPOST" id="Q8VBW5"/>
<dbReference type="PaxDb" id="10090-ENSMUSP00000119238"/>
<dbReference type="PeptideAtlas" id="Q8VBW5"/>
<dbReference type="ProteomicsDB" id="277183">
    <molecule id="Q8VBW5-1"/>
</dbReference>
<dbReference type="ProteomicsDB" id="277184">
    <molecule id="Q8VBW5-2"/>
</dbReference>
<dbReference type="ProteomicsDB" id="277185">
    <molecule id="Q8VBW5-3"/>
</dbReference>
<dbReference type="ProteomicsDB" id="277186">
    <molecule id="Q8VBW5-4"/>
</dbReference>
<dbReference type="Pumba" id="Q8VBW5"/>
<dbReference type="Antibodypedia" id="32337">
    <property type="antibodies" value="114 antibodies from 24 providers"/>
</dbReference>
<dbReference type="DNASU" id="70508"/>
<dbReference type="Ensembl" id="ENSMUST00000066037.13">
    <molecule id="Q8VBW5-2"/>
    <property type="protein sequence ID" value="ENSMUSP00000066384.7"/>
    <property type="gene ID" value="ENSMUSG00000022641.16"/>
</dbReference>
<dbReference type="Ensembl" id="ENSMUST00000089399.11">
    <molecule id="Q8VBW5-4"/>
    <property type="protein sequence ID" value="ENSMUSP00000086821.5"/>
    <property type="gene ID" value="ENSMUSG00000022641.16"/>
</dbReference>
<dbReference type="Ensembl" id="ENSMUST00000089404.10">
    <molecule id="Q8VBW5-3"/>
    <property type="protein sequence ID" value="ENSMUSP00000086826.4"/>
    <property type="gene ID" value="ENSMUSG00000022641.16"/>
</dbReference>
<dbReference type="Ensembl" id="ENSMUST00000114488.8">
    <molecule id="Q8VBW5-1"/>
    <property type="protein sequence ID" value="ENSMUSP00000110132.2"/>
    <property type="gene ID" value="ENSMUSG00000022641.16"/>
</dbReference>
<dbReference type="Ensembl" id="ENSMUST00000138166.8">
    <molecule id="Q8VBW5-1"/>
    <property type="protein sequence ID" value="ENSMUSP00000119238.2"/>
    <property type="gene ID" value="ENSMUSG00000022641.16"/>
</dbReference>
<dbReference type="GeneID" id="70508"/>
<dbReference type="KEGG" id="mmu:70508"/>
<dbReference type="UCSC" id="uc007zkn.2">
    <molecule id="Q8VBW5-1"/>
    <property type="organism name" value="mouse"/>
</dbReference>
<dbReference type="UCSC" id="uc007zkp.2">
    <molecule id="Q8VBW5-3"/>
    <property type="organism name" value="mouse"/>
</dbReference>
<dbReference type="UCSC" id="uc007zkq.2">
    <molecule id="Q8VBW5-2"/>
    <property type="organism name" value="mouse"/>
</dbReference>
<dbReference type="UCSC" id="uc007zkr.2">
    <molecule id="Q8VBW5-4"/>
    <property type="organism name" value="mouse"/>
</dbReference>
<dbReference type="AGR" id="MGI:1917758"/>
<dbReference type="CTD" id="56987"/>
<dbReference type="MGI" id="MGI:1917758">
    <property type="gene designation" value="Bbx"/>
</dbReference>
<dbReference type="VEuPathDB" id="HostDB:ENSMUSG00000022641"/>
<dbReference type="eggNOG" id="KOG2746">
    <property type="taxonomic scope" value="Eukaryota"/>
</dbReference>
<dbReference type="GeneTree" id="ENSGT00940000158592"/>
<dbReference type="HOGENOM" id="CLU_017230_0_0_1"/>
<dbReference type="InParanoid" id="Q8VBW5"/>
<dbReference type="OMA" id="LAEAKMC"/>
<dbReference type="OrthoDB" id="2377365at2759"/>
<dbReference type="PhylomeDB" id="Q8VBW5"/>
<dbReference type="TreeFam" id="TF106402"/>
<dbReference type="BioGRID-ORCS" id="70508">
    <property type="hits" value="6 hits in 79 CRISPR screens"/>
</dbReference>
<dbReference type="ChiTaRS" id="Bbx">
    <property type="organism name" value="mouse"/>
</dbReference>
<dbReference type="EvolutionaryTrace" id="Q8VBW5"/>
<dbReference type="PRO" id="PR:Q8VBW5"/>
<dbReference type="Proteomes" id="UP000000589">
    <property type="component" value="Chromosome 16"/>
</dbReference>
<dbReference type="RNAct" id="Q8VBW5">
    <property type="molecule type" value="protein"/>
</dbReference>
<dbReference type="Bgee" id="ENSMUSG00000022641">
    <property type="expression patterns" value="Expressed in placenta labyrinth and 251 other cell types or tissues"/>
</dbReference>
<dbReference type="GO" id="GO:0005634">
    <property type="term" value="C:nucleus"/>
    <property type="evidence" value="ECO:0007669"/>
    <property type="project" value="UniProtKB-SubCell"/>
</dbReference>
<dbReference type="GO" id="GO:1990837">
    <property type="term" value="F:sequence-specific double-stranded DNA binding"/>
    <property type="evidence" value="ECO:0007669"/>
    <property type="project" value="Ensembl"/>
</dbReference>
<dbReference type="GO" id="GO:0060348">
    <property type="term" value="P:bone development"/>
    <property type="evidence" value="ECO:0000315"/>
    <property type="project" value="MGI"/>
</dbReference>
<dbReference type="CDD" id="cd21989">
    <property type="entry name" value="HMG-box_HBP2"/>
    <property type="match status" value="1"/>
</dbReference>
<dbReference type="FunFam" id="1.10.30.10:FF:000014">
    <property type="entry name" value="HMG box transcription factor BBX"/>
    <property type="match status" value="1"/>
</dbReference>
<dbReference type="Gene3D" id="1.10.30.10">
    <property type="entry name" value="High mobility group box domain"/>
    <property type="match status" value="1"/>
</dbReference>
<dbReference type="InterPro" id="IPR049523">
    <property type="entry name" value="BBX_HMG-box"/>
</dbReference>
<dbReference type="InterPro" id="IPR052412">
    <property type="entry name" value="CC-Dev_Transcription_Reg"/>
</dbReference>
<dbReference type="InterPro" id="IPR009071">
    <property type="entry name" value="HMG_box_dom"/>
</dbReference>
<dbReference type="InterPro" id="IPR036910">
    <property type="entry name" value="HMG_box_dom_sf"/>
</dbReference>
<dbReference type="InterPro" id="IPR019102">
    <property type="entry name" value="TF_HMG_box_BBX_DUF2028"/>
</dbReference>
<dbReference type="PANTHER" id="PTHR13059:SF10">
    <property type="entry name" value="HMG BOX TRANSCRIPTION FACTOR BBX"/>
    <property type="match status" value="1"/>
</dbReference>
<dbReference type="PANTHER" id="PTHR13059">
    <property type="entry name" value="HMG-BOX TRANSCRIPTION FACTOR BBX"/>
    <property type="match status" value="1"/>
</dbReference>
<dbReference type="Pfam" id="PF09667">
    <property type="entry name" value="DUF2028"/>
    <property type="match status" value="2"/>
</dbReference>
<dbReference type="Pfam" id="PF00505">
    <property type="entry name" value="HMG_box"/>
    <property type="match status" value="1"/>
</dbReference>
<dbReference type="SMART" id="SM00398">
    <property type="entry name" value="HMG"/>
    <property type="match status" value="1"/>
</dbReference>
<dbReference type="SUPFAM" id="SSF47095">
    <property type="entry name" value="HMG-box"/>
    <property type="match status" value="1"/>
</dbReference>
<dbReference type="PROSITE" id="PS50118">
    <property type="entry name" value="HMG_BOX_2"/>
    <property type="match status" value="1"/>
</dbReference>
<feature type="chain" id="PRO_0000232886" description="HMG box transcription factor BBX">
    <location>
        <begin position="1"/>
        <end position="907"/>
    </location>
</feature>
<feature type="DNA-binding region" description="HMG box" evidence="2">
    <location>
        <begin position="80"/>
        <end position="148"/>
    </location>
</feature>
<feature type="region of interest" description="Disordered" evidence="3">
    <location>
        <begin position="1"/>
        <end position="24"/>
    </location>
</feature>
<feature type="region of interest" description="Disordered" evidence="3">
    <location>
        <begin position="37"/>
        <end position="80"/>
    </location>
</feature>
<feature type="region of interest" description="Disordered" evidence="3">
    <location>
        <begin position="152"/>
        <end position="185"/>
    </location>
</feature>
<feature type="region of interest" description="Disordered" evidence="3">
    <location>
        <begin position="220"/>
        <end position="242"/>
    </location>
</feature>
<feature type="region of interest" description="Disordered" evidence="3">
    <location>
        <begin position="435"/>
        <end position="483"/>
    </location>
</feature>
<feature type="region of interest" description="Disordered" evidence="3">
    <location>
        <begin position="495"/>
        <end position="612"/>
    </location>
</feature>
<feature type="region of interest" description="Disordered" evidence="3">
    <location>
        <begin position="628"/>
        <end position="672"/>
    </location>
</feature>
<feature type="region of interest" description="Disordered" evidence="3">
    <location>
        <begin position="708"/>
        <end position="736"/>
    </location>
</feature>
<feature type="region of interest" description="Disordered" evidence="3">
    <location>
        <begin position="769"/>
        <end position="854"/>
    </location>
</feature>
<feature type="region of interest" description="Disordered" evidence="3">
    <location>
        <begin position="877"/>
        <end position="907"/>
    </location>
</feature>
<feature type="compositionally biased region" description="Basic and acidic residues" evidence="3">
    <location>
        <begin position="1"/>
        <end position="19"/>
    </location>
</feature>
<feature type="compositionally biased region" description="Acidic residues" evidence="3">
    <location>
        <begin position="39"/>
        <end position="52"/>
    </location>
</feature>
<feature type="compositionally biased region" description="Acidic residues" evidence="3">
    <location>
        <begin position="61"/>
        <end position="75"/>
    </location>
</feature>
<feature type="compositionally biased region" description="Polar residues" evidence="3">
    <location>
        <begin position="152"/>
        <end position="164"/>
    </location>
</feature>
<feature type="compositionally biased region" description="Basic residues" evidence="3">
    <location>
        <begin position="447"/>
        <end position="457"/>
    </location>
</feature>
<feature type="compositionally biased region" description="Basic and acidic residues" evidence="3">
    <location>
        <begin position="496"/>
        <end position="506"/>
    </location>
</feature>
<feature type="compositionally biased region" description="Basic and acidic residues" evidence="3">
    <location>
        <begin position="534"/>
        <end position="550"/>
    </location>
</feature>
<feature type="compositionally biased region" description="Basic and acidic residues" evidence="3">
    <location>
        <begin position="591"/>
        <end position="612"/>
    </location>
</feature>
<feature type="compositionally biased region" description="Polar residues" evidence="3">
    <location>
        <begin position="656"/>
        <end position="668"/>
    </location>
</feature>
<feature type="compositionally biased region" description="Low complexity" evidence="3">
    <location>
        <begin position="723"/>
        <end position="732"/>
    </location>
</feature>
<feature type="compositionally biased region" description="Polar residues" evidence="3">
    <location>
        <begin position="772"/>
        <end position="783"/>
    </location>
</feature>
<feature type="compositionally biased region" description="Basic residues" evidence="3">
    <location>
        <begin position="790"/>
        <end position="801"/>
    </location>
</feature>
<feature type="modified residue" description="Phosphoserine" evidence="9">
    <location>
        <position position="242"/>
    </location>
</feature>
<feature type="modified residue" description="Phosphoserine" evidence="9">
    <location>
        <position position="476"/>
    </location>
</feature>
<feature type="modified residue" description="Phosphoserine" evidence="1">
    <location>
        <position position="483"/>
    </location>
</feature>
<feature type="modified residue" description="Phosphoserine" evidence="1">
    <location>
        <position position="701"/>
    </location>
</feature>
<feature type="modified residue" description="Phosphoserine" evidence="1">
    <location>
        <position position="789"/>
    </location>
</feature>
<feature type="modified residue" description="Phosphoserine" evidence="1">
    <location>
        <position position="811"/>
    </location>
</feature>
<feature type="cross-link" description="Glycyl lysine isopeptide (Lys-Gly) (interchain with G-Cter in SUMO2)" evidence="1">
    <location>
        <position position="384"/>
    </location>
</feature>
<feature type="cross-link" description="Glycyl lysine isopeptide (Lys-Gly) (interchain with G-Cter in SUMO2)" evidence="1">
    <location>
        <position position="571"/>
    </location>
</feature>
<feature type="cross-link" description="Glycyl lysine isopeptide (Lys-Gly) (interchain with G-Cter in SUMO2)" evidence="1">
    <location>
        <position position="693"/>
    </location>
</feature>
<feature type="splice variant" id="VSP_018007" description="In isoform 2." evidence="6">
    <location>
        <begin position="55"/>
        <end position="135"/>
    </location>
</feature>
<feature type="splice variant" id="VSP_018008" description="In isoform 2." evidence="6">
    <location>
        <begin position="223"/>
        <end position="249"/>
    </location>
</feature>
<feature type="splice variant" id="VSP_018009" description="In isoform 2." evidence="6">
    <original>S</original>
    <variation>SKGPFQSQKKNLFHKIVSKYKHKKEKPNVPE</variation>
    <location>
        <position position="730"/>
    </location>
</feature>
<feature type="splice variant" id="VSP_018010" description="In isoform 3." evidence="7">
    <location>
        <begin position="732"/>
        <end position="751"/>
    </location>
</feature>
<feature type="splice variant" id="VSP_018011" description="In isoform 4." evidence="7">
    <original>SGDKWSHKQFFLDAIHPT</original>
    <variation>PFQSQKKNLFHKIVSKYK</variation>
    <location>
        <begin position="733"/>
        <end position="750"/>
    </location>
</feature>
<feature type="splice variant" id="VSP_018012" description="In isoform 4." evidence="7">
    <location>
        <begin position="751"/>
        <end position="907"/>
    </location>
</feature>
<feature type="sequence variant" description="In strain: C3H/He." evidence="5">
    <original>P</original>
    <variation>L</variation>
    <location>
        <position position="30"/>
    </location>
</feature>
<feature type="sequence variant" description="In strain: C3H/He." evidence="5">
    <original>Q</original>
    <variation>H</variation>
    <location>
        <position position="281"/>
    </location>
</feature>
<feature type="sequence conflict" description="In Ref. 1; AAL58872/AAL58873 and 2; BAB30768." evidence="8" ref="1 2">
    <original>L</original>
    <variation>F</variation>
    <location>
        <position position="269"/>
    </location>
</feature>
<feature type="sequence conflict" description="In Ref. 2; BAC34285." evidence="8" ref="2">
    <original>K</original>
    <variation>R</variation>
    <location>
        <position position="450"/>
    </location>
</feature>
<feature type="sequence conflict" description="In Ref. 1; AAL58872/AAL58873." evidence="8" ref="1">
    <original>N</original>
    <variation>T</variation>
    <location>
        <position position="455"/>
    </location>
</feature>
<feature type="helix" evidence="10">
    <location>
        <begin position="86"/>
        <end position="101"/>
    </location>
</feature>
<feature type="strand" evidence="10">
    <location>
        <begin position="103"/>
        <end position="105"/>
    </location>
</feature>
<feature type="helix" evidence="10">
    <location>
        <begin position="109"/>
        <end position="119"/>
    </location>
</feature>
<feature type="helix" evidence="10">
    <location>
        <begin position="123"/>
        <end position="140"/>
    </location>
</feature>
<protein>
    <recommendedName>
        <fullName>HMG box transcription factor BBX</fullName>
    </recommendedName>
    <alternativeName>
        <fullName>Bobby sox homolog</fullName>
    </alternativeName>
    <alternativeName>
        <fullName>HMG box-containing protein 2</fullName>
    </alternativeName>
</protein>
<proteinExistence type="evidence at protein level"/>
<gene>
    <name type="primary">Bbx</name>
    <name type="synonym">Hbp2</name>
</gene>
<name>BBX_MOUSE</name>
<sequence>MKGSNRNKDHSTEGEGDGKRPKRKCLQWHPLLAKKLLDFSEEEEEDEEEEDIDKVQLLEADGLEQDVAETEDDESPEQRARRPMNAFLLFCKRHRSLVRQEHPRLDNRGATKILADWWAVLDPKEKQKYTDMAKEYKDAFMKANPGYRWCPTTNKPVKSPTPTVNPRKKLWAFPPDSSRDLPTPKKAKTEVPQLNFGMADPTQMGGLSMLLLAGEHALGTPEASSGTCRPDISESPELRQKSPLFQFAEISSRTSHPDAPSKQCQASALFQFAEISSSTSQLGGTEPVKRCGNSALFQLAEMCLASEGVKMEDTKLIKSKESDGGRIEEIEKGKEERGTEVEKTTETSFQKEAEFGKSAKGNVRESKDLRDIEQLQMDNVMAIKVEDPKEIRKEPEDDQKYSHFPDFSYSASSKIIISGVPSRKDHMCHPHGIMIIEDPTTLNKPEKIKKKKKKNKLDRHGNDKSTPKKTCKKRQSSESDIESVMYTIEAVAKGDWGVDKLGETPRKKVRPSSSGKGGILDAKPPKKKVKSKEKKVSKEKCSDITKESRPPDFLSISASKSVPGEVPEGIKAEPLTPTEDALPPSLPGQAKPEDSDCHRKTETCGSRKSERSCKGALYKTLVSEGMLTSLRANVDRGKRSSGKGNSSDHEGCWSEESWTFNQSGTSGSKKFKKKLREDSFLGSAKLDEEFEKKFNSLPQYSPITFDRKCVSTPRKKKKTGNMSSESTKTSKGSGDKWSHKQFFLDAIHPTEAIFSEDKSTTEPAFKVKNALSIPNTPEPTTMQEPLVGSQKRKARKTKITHLVRTADGRVSPAGGTLDDKPKEQLQRSLPKVPGTYCGDNCSHSTVEEPRSSTPDMPAVSAFFSLAALAEVAAMENVHRGQRSTPLTHDGQPKEMPQAPVLISCADQ</sequence>